<feature type="chain" id="PRO_0000091932" description="Oligopeptide transport ATP-binding protein AppF">
    <location>
        <begin position="1"/>
        <end position="329"/>
    </location>
</feature>
<feature type="domain" description="ABC transporter" evidence="1">
    <location>
        <begin position="10"/>
        <end position="261"/>
    </location>
</feature>
<feature type="binding site" evidence="1">
    <location>
        <begin position="53"/>
        <end position="60"/>
    </location>
    <ligand>
        <name>ATP</name>
        <dbReference type="ChEBI" id="CHEBI:30616"/>
    </ligand>
</feature>
<feature type="sequence conflict" description="In Ref. 1; AAA62357." evidence="2" ref="1">
    <original>A</original>
    <variation>P</variation>
    <location>
        <position position="197"/>
    </location>
</feature>
<dbReference type="EMBL" id="U20909">
    <property type="protein sequence ID" value="AAA62357.1"/>
    <property type="molecule type" value="Genomic_DNA"/>
</dbReference>
<dbReference type="EMBL" id="AL009126">
    <property type="protein sequence ID" value="CAB12994.2"/>
    <property type="molecule type" value="Genomic_DNA"/>
</dbReference>
<dbReference type="PIR" id="I40544">
    <property type="entry name" value="I40544"/>
</dbReference>
<dbReference type="RefSeq" id="NP_389019.2">
    <property type="nucleotide sequence ID" value="NC_000964.3"/>
</dbReference>
<dbReference type="RefSeq" id="WP_003232964.1">
    <property type="nucleotide sequence ID" value="NZ_OZ025638.1"/>
</dbReference>
<dbReference type="SMR" id="P42065"/>
<dbReference type="FunCoup" id="P42065">
    <property type="interactions" value="298"/>
</dbReference>
<dbReference type="STRING" id="224308.BSU11370"/>
<dbReference type="TCDB" id="3.A.1.5.20">
    <property type="family name" value="the atp-binding cassette (abc) superfamily"/>
</dbReference>
<dbReference type="PaxDb" id="224308-BSU11370"/>
<dbReference type="EnsemblBacteria" id="CAB12994">
    <property type="protein sequence ID" value="CAB12994"/>
    <property type="gene ID" value="BSU_11370"/>
</dbReference>
<dbReference type="GeneID" id="936390"/>
<dbReference type="KEGG" id="bsu:BSU11370"/>
<dbReference type="PATRIC" id="fig|224308.179.peg.1222"/>
<dbReference type="eggNOG" id="COG4608">
    <property type="taxonomic scope" value="Bacteria"/>
</dbReference>
<dbReference type="InParanoid" id="P42065"/>
<dbReference type="OrthoDB" id="9802264at2"/>
<dbReference type="PhylomeDB" id="P42065"/>
<dbReference type="BioCyc" id="BSUB:BSU11370-MONOMER"/>
<dbReference type="Proteomes" id="UP000001570">
    <property type="component" value="Chromosome"/>
</dbReference>
<dbReference type="GO" id="GO:0005886">
    <property type="term" value="C:plasma membrane"/>
    <property type="evidence" value="ECO:0007669"/>
    <property type="project" value="UniProtKB-SubCell"/>
</dbReference>
<dbReference type="GO" id="GO:0005524">
    <property type="term" value="F:ATP binding"/>
    <property type="evidence" value="ECO:0007669"/>
    <property type="project" value="UniProtKB-KW"/>
</dbReference>
<dbReference type="GO" id="GO:0016887">
    <property type="term" value="F:ATP hydrolysis activity"/>
    <property type="evidence" value="ECO:0007669"/>
    <property type="project" value="InterPro"/>
</dbReference>
<dbReference type="GO" id="GO:0030420">
    <property type="term" value="P:establishment of competence for transformation"/>
    <property type="evidence" value="ECO:0007669"/>
    <property type="project" value="UniProtKB-KW"/>
</dbReference>
<dbReference type="GO" id="GO:0015833">
    <property type="term" value="P:peptide transport"/>
    <property type="evidence" value="ECO:0007669"/>
    <property type="project" value="UniProtKB-KW"/>
</dbReference>
<dbReference type="GO" id="GO:0015031">
    <property type="term" value="P:protein transport"/>
    <property type="evidence" value="ECO:0007669"/>
    <property type="project" value="UniProtKB-KW"/>
</dbReference>
<dbReference type="GO" id="GO:0030435">
    <property type="term" value="P:sporulation resulting in formation of a cellular spore"/>
    <property type="evidence" value="ECO:0007669"/>
    <property type="project" value="UniProtKB-KW"/>
</dbReference>
<dbReference type="GO" id="GO:0055085">
    <property type="term" value="P:transmembrane transport"/>
    <property type="evidence" value="ECO:0007669"/>
    <property type="project" value="UniProtKB-ARBA"/>
</dbReference>
<dbReference type="CDD" id="cd03257">
    <property type="entry name" value="ABC_NikE_OppD_transporters"/>
    <property type="match status" value="1"/>
</dbReference>
<dbReference type="FunFam" id="3.40.50.300:FF:000016">
    <property type="entry name" value="Oligopeptide ABC transporter ATP-binding component"/>
    <property type="match status" value="1"/>
</dbReference>
<dbReference type="Gene3D" id="3.40.50.300">
    <property type="entry name" value="P-loop containing nucleotide triphosphate hydrolases"/>
    <property type="match status" value="1"/>
</dbReference>
<dbReference type="InterPro" id="IPR003593">
    <property type="entry name" value="AAA+_ATPase"/>
</dbReference>
<dbReference type="InterPro" id="IPR050319">
    <property type="entry name" value="ABC_transp_ATP-bind"/>
</dbReference>
<dbReference type="InterPro" id="IPR003439">
    <property type="entry name" value="ABC_transporter-like_ATP-bd"/>
</dbReference>
<dbReference type="InterPro" id="IPR017871">
    <property type="entry name" value="ABC_transporter-like_CS"/>
</dbReference>
<dbReference type="InterPro" id="IPR013563">
    <property type="entry name" value="Oligopep_ABC_C"/>
</dbReference>
<dbReference type="InterPro" id="IPR027417">
    <property type="entry name" value="P-loop_NTPase"/>
</dbReference>
<dbReference type="NCBIfam" id="TIGR01727">
    <property type="entry name" value="oligo_HPY"/>
    <property type="match status" value="1"/>
</dbReference>
<dbReference type="NCBIfam" id="NF008453">
    <property type="entry name" value="PRK11308.1"/>
    <property type="match status" value="1"/>
</dbReference>
<dbReference type="PANTHER" id="PTHR43776:SF7">
    <property type="entry name" value="D,D-DIPEPTIDE TRANSPORT ATP-BINDING PROTEIN DDPF-RELATED"/>
    <property type="match status" value="1"/>
</dbReference>
<dbReference type="PANTHER" id="PTHR43776">
    <property type="entry name" value="TRANSPORT ATP-BINDING PROTEIN"/>
    <property type="match status" value="1"/>
</dbReference>
<dbReference type="Pfam" id="PF00005">
    <property type="entry name" value="ABC_tran"/>
    <property type="match status" value="1"/>
</dbReference>
<dbReference type="Pfam" id="PF08352">
    <property type="entry name" value="oligo_HPY"/>
    <property type="match status" value="1"/>
</dbReference>
<dbReference type="SMART" id="SM00382">
    <property type="entry name" value="AAA"/>
    <property type="match status" value="1"/>
</dbReference>
<dbReference type="SUPFAM" id="SSF52540">
    <property type="entry name" value="P-loop containing nucleoside triphosphate hydrolases"/>
    <property type="match status" value="1"/>
</dbReference>
<dbReference type="PROSITE" id="PS00211">
    <property type="entry name" value="ABC_TRANSPORTER_1"/>
    <property type="match status" value="1"/>
</dbReference>
<dbReference type="PROSITE" id="PS50893">
    <property type="entry name" value="ABC_TRANSPORTER_2"/>
    <property type="match status" value="1"/>
</dbReference>
<comment type="function">
    <text>This protein is a component of an oligopeptide permease, a binding protein-dependent transport system. This APP system can completely substitute for the OPP system in both sporulation and genetic competence, though, unlike OPP, is incapable of transporting tripeptides. Probably responsible for energy coupling to the transport system.</text>
</comment>
<comment type="subcellular location">
    <subcellularLocation>
        <location>Cell membrane</location>
        <topology>Peripheral membrane protein</topology>
    </subcellularLocation>
</comment>
<comment type="similarity">
    <text evidence="2">Belongs to the ABC transporter superfamily.</text>
</comment>
<organism>
    <name type="scientific">Bacillus subtilis (strain 168)</name>
    <dbReference type="NCBI Taxonomy" id="224308"/>
    <lineage>
        <taxon>Bacteria</taxon>
        <taxon>Bacillati</taxon>
        <taxon>Bacillota</taxon>
        <taxon>Bacilli</taxon>
        <taxon>Bacillales</taxon>
        <taxon>Bacillaceae</taxon>
        <taxon>Bacillus</taxon>
    </lineage>
</organism>
<reference key="1">
    <citation type="journal article" date="1994" name="Mol. Microbiol.">
        <title>Identification of a second oligopeptide transport system in Bacillus subtilis and determination of its role in sporulation.</title>
        <authorList>
            <person name="Koide A."/>
            <person name="Hoch J.A."/>
        </authorList>
    </citation>
    <scope>NUCLEOTIDE SEQUENCE [GENOMIC DNA]</scope>
    <source>
        <strain>168</strain>
    </source>
</reference>
<reference key="2">
    <citation type="journal article" date="1997" name="Nature">
        <title>The complete genome sequence of the Gram-positive bacterium Bacillus subtilis.</title>
        <authorList>
            <person name="Kunst F."/>
            <person name="Ogasawara N."/>
            <person name="Moszer I."/>
            <person name="Albertini A.M."/>
            <person name="Alloni G."/>
            <person name="Azevedo V."/>
            <person name="Bertero M.G."/>
            <person name="Bessieres P."/>
            <person name="Bolotin A."/>
            <person name="Borchert S."/>
            <person name="Borriss R."/>
            <person name="Boursier L."/>
            <person name="Brans A."/>
            <person name="Braun M."/>
            <person name="Brignell S.C."/>
            <person name="Bron S."/>
            <person name="Brouillet S."/>
            <person name="Bruschi C.V."/>
            <person name="Caldwell B."/>
            <person name="Capuano V."/>
            <person name="Carter N.M."/>
            <person name="Choi S.-K."/>
            <person name="Codani J.-J."/>
            <person name="Connerton I.F."/>
            <person name="Cummings N.J."/>
            <person name="Daniel R.A."/>
            <person name="Denizot F."/>
            <person name="Devine K.M."/>
            <person name="Duesterhoeft A."/>
            <person name="Ehrlich S.D."/>
            <person name="Emmerson P.T."/>
            <person name="Entian K.-D."/>
            <person name="Errington J."/>
            <person name="Fabret C."/>
            <person name="Ferrari E."/>
            <person name="Foulger D."/>
            <person name="Fritz C."/>
            <person name="Fujita M."/>
            <person name="Fujita Y."/>
            <person name="Fuma S."/>
            <person name="Galizzi A."/>
            <person name="Galleron N."/>
            <person name="Ghim S.-Y."/>
            <person name="Glaser P."/>
            <person name="Goffeau A."/>
            <person name="Golightly E.J."/>
            <person name="Grandi G."/>
            <person name="Guiseppi G."/>
            <person name="Guy B.J."/>
            <person name="Haga K."/>
            <person name="Haiech J."/>
            <person name="Harwood C.R."/>
            <person name="Henaut A."/>
            <person name="Hilbert H."/>
            <person name="Holsappel S."/>
            <person name="Hosono S."/>
            <person name="Hullo M.-F."/>
            <person name="Itaya M."/>
            <person name="Jones L.-M."/>
            <person name="Joris B."/>
            <person name="Karamata D."/>
            <person name="Kasahara Y."/>
            <person name="Klaerr-Blanchard M."/>
            <person name="Klein C."/>
            <person name="Kobayashi Y."/>
            <person name="Koetter P."/>
            <person name="Koningstein G."/>
            <person name="Krogh S."/>
            <person name="Kumano M."/>
            <person name="Kurita K."/>
            <person name="Lapidus A."/>
            <person name="Lardinois S."/>
            <person name="Lauber J."/>
            <person name="Lazarevic V."/>
            <person name="Lee S.-M."/>
            <person name="Levine A."/>
            <person name="Liu H."/>
            <person name="Masuda S."/>
            <person name="Mauel C."/>
            <person name="Medigue C."/>
            <person name="Medina N."/>
            <person name="Mellado R.P."/>
            <person name="Mizuno M."/>
            <person name="Moestl D."/>
            <person name="Nakai S."/>
            <person name="Noback M."/>
            <person name="Noone D."/>
            <person name="O'Reilly M."/>
            <person name="Ogawa K."/>
            <person name="Ogiwara A."/>
            <person name="Oudega B."/>
            <person name="Park S.-H."/>
            <person name="Parro V."/>
            <person name="Pohl T.M."/>
            <person name="Portetelle D."/>
            <person name="Porwollik S."/>
            <person name="Prescott A.M."/>
            <person name="Presecan E."/>
            <person name="Pujic P."/>
            <person name="Purnelle B."/>
            <person name="Rapoport G."/>
            <person name="Rey M."/>
            <person name="Reynolds S."/>
            <person name="Rieger M."/>
            <person name="Rivolta C."/>
            <person name="Rocha E."/>
            <person name="Roche B."/>
            <person name="Rose M."/>
            <person name="Sadaie Y."/>
            <person name="Sato T."/>
            <person name="Scanlan E."/>
            <person name="Schleich S."/>
            <person name="Schroeter R."/>
            <person name="Scoffone F."/>
            <person name="Sekiguchi J."/>
            <person name="Sekowska A."/>
            <person name="Seror S.J."/>
            <person name="Serror P."/>
            <person name="Shin B.-S."/>
            <person name="Soldo B."/>
            <person name="Sorokin A."/>
            <person name="Tacconi E."/>
            <person name="Takagi T."/>
            <person name="Takahashi H."/>
            <person name="Takemaru K."/>
            <person name="Takeuchi M."/>
            <person name="Tamakoshi A."/>
            <person name="Tanaka T."/>
            <person name="Terpstra P."/>
            <person name="Tognoni A."/>
            <person name="Tosato V."/>
            <person name="Uchiyama S."/>
            <person name="Vandenbol M."/>
            <person name="Vannier F."/>
            <person name="Vassarotti A."/>
            <person name="Viari A."/>
            <person name="Wambutt R."/>
            <person name="Wedler E."/>
            <person name="Wedler H."/>
            <person name="Weitzenegger T."/>
            <person name="Winters P."/>
            <person name="Wipat A."/>
            <person name="Yamamoto H."/>
            <person name="Yamane K."/>
            <person name="Yasumoto K."/>
            <person name="Yata K."/>
            <person name="Yoshida K."/>
            <person name="Yoshikawa H.-F."/>
            <person name="Zumstein E."/>
            <person name="Yoshikawa H."/>
            <person name="Danchin A."/>
        </authorList>
    </citation>
    <scope>NUCLEOTIDE SEQUENCE [LARGE SCALE GENOMIC DNA]</scope>
    <source>
        <strain>168</strain>
    </source>
</reference>
<reference key="3">
    <citation type="journal article" date="2009" name="Microbiology">
        <title>From a consortium sequence to a unified sequence: the Bacillus subtilis 168 reference genome a decade later.</title>
        <authorList>
            <person name="Barbe V."/>
            <person name="Cruveiller S."/>
            <person name="Kunst F."/>
            <person name="Lenoble P."/>
            <person name="Meurice G."/>
            <person name="Sekowska A."/>
            <person name="Vallenet D."/>
            <person name="Wang T."/>
            <person name="Moszer I."/>
            <person name="Medigue C."/>
            <person name="Danchin A."/>
        </authorList>
    </citation>
    <scope>SEQUENCE REVISION TO 197</scope>
</reference>
<sequence length="329" mass="37086">MTAANQETILELRDVKKYFPIRSGLFQRKVGDVKAVDGVSFSLKKGETLGIVGESGCGKSTAGRTMIRLYKPTEGQILFKGQDISNLSEEKLRKSVRKNIQMVFQDPFASLNPRKTLRSIIKEPFNTHNMYTMRERNEKVEELLARVGLHPSFAGRYPHEFSGGQRQRIGIARALTLNPELIIADEPVSALDVSIQAQVINLMEELQEEFNLTYLFISHDLSVVRHISDRVGVMYLGKMMELTGKHELYDNPLHPYTQALLSSVPVTRKRGSVKRERIVLKGELPSPANPPKGCVFHTRCPVAKPICKEQIPEFKEAAPSHFVACHLYS</sequence>
<keyword id="KW-0067">ATP-binding</keyword>
<keyword id="KW-1003">Cell membrane</keyword>
<keyword id="KW-0178">Competence</keyword>
<keyword id="KW-0472">Membrane</keyword>
<keyword id="KW-0547">Nucleotide-binding</keyword>
<keyword id="KW-0571">Peptide transport</keyword>
<keyword id="KW-0653">Protein transport</keyword>
<keyword id="KW-1185">Reference proteome</keyword>
<keyword id="KW-0749">Sporulation</keyword>
<keyword id="KW-0813">Transport</keyword>
<proteinExistence type="inferred from homology"/>
<accession>P42065</accession>
<gene>
    <name type="primary">appF</name>
    <name type="ordered locus">BSU11370</name>
</gene>
<name>APPF_BACSU</name>
<protein>
    <recommendedName>
        <fullName>Oligopeptide transport ATP-binding protein AppF</fullName>
    </recommendedName>
</protein>
<evidence type="ECO:0000255" key="1">
    <source>
        <dbReference type="PROSITE-ProRule" id="PRU00434"/>
    </source>
</evidence>
<evidence type="ECO:0000305" key="2"/>